<protein>
    <recommendedName>
        <fullName evidence="1">Ribonuclease Z</fullName>
        <shortName evidence="1">RNase Z</shortName>
        <ecNumber evidence="1">3.1.26.11</ecNumber>
    </recommendedName>
    <alternativeName>
        <fullName evidence="1">tRNA 3 endonuclease</fullName>
    </alternativeName>
    <alternativeName>
        <fullName evidence="1">tRNase Z</fullName>
    </alternativeName>
</protein>
<proteinExistence type="inferred from homology"/>
<comment type="function">
    <text evidence="1">Zinc phosphodiesterase, which displays some tRNA 3'-processing endonuclease activity. Probably involved in tRNA maturation, by removing a 3'-trailer from precursor tRNA.</text>
</comment>
<comment type="catalytic activity">
    <reaction evidence="1">
        <text>Endonucleolytic cleavage of RNA, removing extra 3' nucleotides from tRNA precursor, generating 3' termini of tRNAs. A 3'-hydroxy group is left at the tRNA terminus and a 5'-phosphoryl group is left at the trailer molecule.</text>
        <dbReference type="EC" id="3.1.26.11"/>
    </reaction>
</comment>
<comment type="cofactor">
    <cofactor evidence="1">
        <name>Zn(2+)</name>
        <dbReference type="ChEBI" id="CHEBI:29105"/>
    </cofactor>
    <text evidence="1">Binds 2 Zn(2+) ions.</text>
</comment>
<comment type="subunit">
    <text evidence="1">Homodimer.</text>
</comment>
<comment type="similarity">
    <text evidence="1">Belongs to the RNase Z family.</text>
</comment>
<accession>Q8NWE6</accession>
<organism>
    <name type="scientific">Staphylococcus aureus (strain MW2)</name>
    <dbReference type="NCBI Taxonomy" id="196620"/>
    <lineage>
        <taxon>Bacteria</taxon>
        <taxon>Bacillati</taxon>
        <taxon>Bacillota</taxon>
        <taxon>Bacilli</taxon>
        <taxon>Bacillales</taxon>
        <taxon>Staphylococcaceae</taxon>
        <taxon>Staphylococcus</taxon>
    </lineage>
</organism>
<name>RNZ_STAAW</name>
<gene>
    <name evidence="1" type="primary">rnz</name>
    <name type="ordered locus">MW1458</name>
</gene>
<keyword id="KW-0255">Endonuclease</keyword>
<keyword id="KW-0378">Hydrolase</keyword>
<keyword id="KW-0479">Metal-binding</keyword>
<keyword id="KW-0540">Nuclease</keyword>
<keyword id="KW-0819">tRNA processing</keyword>
<keyword id="KW-0862">Zinc</keyword>
<evidence type="ECO:0000255" key="1">
    <source>
        <dbReference type="HAMAP-Rule" id="MF_01818"/>
    </source>
</evidence>
<reference key="1">
    <citation type="journal article" date="2002" name="Lancet">
        <title>Genome and virulence determinants of high virulence community-acquired MRSA.</title>
        <authorList>
            <person name="Baba T."/>
            <person name="Takeuchi F."/>
            <person name="Kuroda M."/>
            <person name="Yuzawa H."/>
            <person name="Aoki K."/>
            <person name="Oguchi A."/>
            <person name="Nagai Y."/>
            <person name="Iwama N."/>
            <person name="Asano K."/>
            <person name="Naimi T."/>
            <person name="Kuroda H."/>
            <person name="Cui L."/>
            <person name="Yamamoto K."/>
            <person name="Hiramatsu K."/>
        </authorList>
    </citation>
    <scope>NUCLEOTIDE SEQUENCE [LARGE SCALE GENOMIC DNA]</scope>
    <source>
        <strain>MW2</strain>
    </source>
</reference>
<feature type="chain" id="PRO_0000155898" description="Ribonuclease Z">
    <location>
        <begin position="1"/>
        <end position="306"/>
    </location>
</feature>
<feature type="active site" description="Proton acceptor" evidence="1">
    <location>
        <position position="67"/>
    </location>
</feature>
<feature type="binding site" evidence="1">
    <location>
        <position position="63"/>
    </location>
    <ligand>
        <name>Zn(2+)</name>
        <dbReference type="ChEBI" id="CHEBI:29105"/>
        <label>1</label>
        <note>catalytic</note>
    </ligand>
</feature>
<feature type="binding site" evidence="1">
    <location>
        <position position="65"/>
    </location>
    <ligand>
        <name>Zn(2+)</name>
        <dbReference type="ChEBI" id="CHEBI:29105"/>
        <label>1</label>
        <note>catalytic</note>
    </ligand>
</feature>
<feature type="binding site" evidence="1">
    <location>
        <position position="67"/>
    </location>
    <ligand>
        <name>Zn(2+)</name>
        <dbReference type="ChEBI" id="CHEBI:29105"/>
        <label>2</label>
        <note>catalytic</note>
    </ligand>
</feature>
<feature type="binding site" evidence="1">
    <location>
        <position position="68"/>
    </location>
    <ligand>
        <name>Zn(2+)</name>
        <dbReference type="ChEBI" id="CHEBI:29105"/>
        <label>2</label>
        <note>catalytic</note>
    </ligand>
</feature>
<feature type="binding site" evidence="1">
    <location>
        <position position="141"/>
    </location>
    <ligand>
        <name>Zn(2+)</name>
        <dbReference type="ChEBI" id="CHEBI:29105"/>
        <label>1</label>
        <note>catalytic</note>
    </ligand>
</feature>
<feature type="binding site" evidence="1">
    <location>
        <position position="211"/>
    </location>
    <ligand>
        <name>Zn(2+)</name>
        <dbReference type="ChEBI" id="CHEBI:29105"/>
        <label>1</label>
        <note>catalytic</note>
    </ligand>
</feature>
<feature type="binding site" evidence="1">
    <location>
        <position position="211"/>
    </location>
    <ligand>
        <name>Zn(2+)</name>
        <dbReference type="ChEBI" id="CHEBI:29105"/>
        <label>2</label>
        <note>catalytic</note>
    </ligand>
</feature>
<feature type="binding site" evidence="1">
    <location>
        <position position="269"/>
    </location>
    <ligand>
        <name>Zn(2+)</name>
        <dbReference type="ChEBI" id="CHEBI:29105"/>
        <label>2</label>
        <note>catalytic</note>
    </ligand>
</feature>
<sequence length="306" mass="34557">MEVTFFGTSAGLPTKERNTQAIALNLEPYSNSIWLFDVGEGTQHQILHHAIKLGKVTHIFITHMHGDHIFGLPGLLSSRSFQGGEQKPLTLVGPKGIKAYVEMSMNLSESHLNYPITYIEIDDHLTYHHDGFTVEAHLLNHGVPSYGYRVMAPETTGTINVEALKNIGLEPGPKYQEVKSHDTFEHNGQVYQSKDFRGESKQGPVVAIFGDTKPCSNERVISRDADVMVHEATYIDGEKHLANNYHHSHIEDVFALIKEANVKRTLITHLSNRYNTEDINEIYQTLIQNEDTPNFNFVKDFDSFKV</sequence>
<dbReference type="EC" id="3.1.26.11" evidence="1"/>
<dbReference type="EMBL" id="BA000033">
    <property type="protein sequence ID" value="BAB95323.1"/>
    <property type="molecule type" value="Genomic_DNA"/>
</dbReference>
<dbReference type="RefSeq" id="WP_000454068.1">
    <property type="nucleotide sequence ID" value="NC_003923.1"/>
</dbReference>
<dbReference type="SMR" id="Q8NWE6"/>
<dbReference type="KEGG" id="sam:MW1458"/>
<dbReference type="HOGENOM" id="CLU_031317_2_0_9"/>
<dbReference type="GO" id="GO:0042781">
    <property type="term" value="F:3'-tRNA processing endoribonuclease activity"/>
    <property type="evidence" value="ECO:0007669"/>
    <property type="project" value="UniProtKB-UniRule"/>
</dbReference>
<dbReference type="GO" id="GO:0008270">
    <property type="term" value="F:zinc ion binding"/>
    <property type="evidence" value="ECO:0007669"/>
    <property type="project" value="UniProtKB-UniRule"/>
</dbReference>
<dbReference type="CDD" id="cd07717">
    <property type="entry name" value="RNaseZ_ZiPD-like_MBL-fold"/>
    <property type="match status" value="1"/>
</dbReference>
<dbReference type="FunFam" id="3.60.15.10:FF:000002">
    <property type="entry name" value="Ribonuclease Z"/>
    <property type="match status" value="1"/>
</dbReference>
<dbReference type="Gene3D" id="3.60.15.10">
    <property type="entry name" value="Ribonuclease Z/Hydroxyacylglutathione hydrolase-like"/>
    <property type="match status" value="1"/>
</dbReference>
<dbReference type="HAMAP" id="MF_01818">
    <property type="entry name" value="RNase_Z_BN"/>
    <property type="match status" value="1"/>
</dbReference>
<dbReference type="InterPro" id="IPR036866">
    <property type="entry name" value="RibonucZ/Hydroxyglut_hydro"/>
</dbReference>
<dbReference type="InterPro" id="IPR013471">
    <property type="entry name" value="RNase_Z/BN"/>
</dbReference>
<dbReference type="InterPro" id="IPR027794">
    <property type="entry name" value="tRNase_Z_dom"/>
</dbReference>
<dbReference type="NCBIfam" id="NF000801">
    <property type="entry name" value="PRK00055.1-3"/>
    <property type="match status" value="1"/>
</dbReference>
<dbReference type="NCBIfam" id="TIGR02651">
    <property type="entry name" value="RNase_Z"/>
    <property type="match status" value="1"/>
</dbReference>
<dbReference type="PANTHER" id="PTHR46018">
    <property type="entry name" value="ZINC PHOSPHODIESTERASE ELAC PROTEIN 1"/>
    <property type="match status" value="1"/>
</dbReference>
<dbReference type="PANTHER" id="PTHR46018:SF2">
    <property type="entry name" value="ZINC PHOSPHODIESTERASE ELAC PROTEIN 1"/>
    <property type="match status" value="1"/>
</dbReference>
<dbReference type="Pfam" id="PF13691">
    <property type="entry name" value="Lactamase_B_4"/>
    <property type="match status" value="1"/>
</dbReference>
<dbReference type="SUPFAM" id="SSF56281">
    <property type="entry name" value="Metallo-hydrolase/oxidoreductase"/>
    <property type="match status" value="1"/>
</dbReference>